<keyword id="KW-0131">Cell cycle</keyword>
<keyword id="KW-0132">Cell division</keyword>
<keyword id="KW-0997">Cell inner membrane</keyword>
<keyword id="KW-1003">Cell membrane</keyword>
<keyword id="KW-0175">Coiled coil</keyword>
<keyword id="KW-0472">Membrane</keyword>
<keyword id="KW-0812">Transmembrane</keyword>
<keyword id="KW-1133">Transmembrane helix</keyword>
<name>FTSB_YERPB</name>
<gene>
    <name evidence="1" type="primary">ftsB</name>
    <name type="ordered locus">YPTS_0803</name>
</gene>
<organism>
    <name type="scientific">Yersinia pseudotuberculosis serotype IB (strain PB1/+)</name>
    <dbReference type="NCBI Taxonomy" id="502801"/>
    <lineage>
        <taxon>Bacteria</taxon>
        <taxon>Pseudomonadati</taxon>
        <taxon>Pseudomonadota</taxon>
        <taxon>Gammaproteobacteria</taxon>
        <taxon>Enterobacterales</taxon>
        <taxon>Yersiniaceae</taxon>
        <taxon>Yersinia</taxon>
    </lineage>
</organism>
<accession>B2K576</accession>
<comment type="function">
    <text evidence="1">Essential cell division protein. May link together the upstream cell division proteins, which are predominantly cytoplasmic, with the downstream cell division proteins, which are predominantly periplasmic.</text>
</comment>
<comment type="subunit">
    <text evidence="1">Part of a complex composed of FtsB, FtsL and FtsQ.</text>
</comment>
<comment type="subcellular location">
    <subcellularLocation>
        <location evidence="1">Cell inner membrane</location>
        <topology evidence="1">Single-pass type II membrane protein</topology>
    </subcellularLocation>
    <text evidence="1">Localizes to the division septum.</text>
</comment>
<comment type="similarity">
    <text evidence="1">Belongs to the FtsB family.</text>
</comment>
<sequence>MGKLTLLLLVLLGWLQYSLWLGKNGIHDFVRVKEDVAAQEANNSTLKARNDQLFAEIDDLNGGQEAIEERARNELGMIKPGESFYRLVPDQSRRNAGTPSTQNNAQ</sequence>
<evidence type="ECO:0000255" key="1">
    <source>
        <dbReference type="HAMAP-Rule" id="MF_00599"/>
    </source>
</evidence>
<feature type="chain" id="PRO_1000129953" description="Cell division protein FtsB">
    <location>
        <begin position="1"/>
        <end position="106"/>
    </location>
</feature>
<feature type="topological domain" description="Cytoplasmic" evidence="1">
    <location>
        <begin position="1"/>
        <end position="3"/>
    </location>
</feature>
<feature type="transmembrane region" description="Helical" evidence="1">
    <location>
        <begin position="4"/>
        <end position="21"/>
    </location>
</feature>
<feature type="topological domain" description="Periplasmic" evidence="1">
    <location>
        <begin position="22"/>
        <end position="106"/>
    </location>
</feature>
<feature type="coiled-coil region" evidence="1">
    <location>
        <begin position="31"/>
        <end position="62"/>
    </location>
</feature>
<dbReference type="EMBL" id="CP001048">
    <property type="protein sequence ID" value="ACC87787.1"/>
    <property type="molecule type" value="Genomic_DNA"/>
</dbReference>
<dbReference type="RefSeq" id="WP_002209390.1">
    <property type="nucleotide sequence ID" value="NZ_CP009780.1"/>
</dbReference>
<dbReference type="SMR" id="B2K576"/>
<dbReference type="GeneID" id="57975347"/>
<dbReference type="KEGG" id="ypb:YPTS_0803"/>
<dbReference type="PATRIC" id="fig|502801.10.peg.134"/>
<dbReference type="GO" id="GO:0032153">
    <property type="term" value="C:cell division site"/>
    <property type="evidence" value="ECO:0007669"/>
    <property type="project" value="UniProtKB-UniRule"/>
</dbReference>
<dbReference type="GO" id="GO:0030428">
    <property type="term" value="C:cell septum"/>
    <property type="evidence" value="ECO:0007669"/>
    <property type="project" value="TreeGrafter"/>
</dbReference>
<dbReference type="GO" id="GO:0005886">
    <property type="term" value="C:plasma membrane"/>
    <property type="evidence" value="ECO:0007669"/>
    <property type="project" value="UniProtKB-SubCell"/>
</dbReference>
<dbReference type="GO" id="GO:0043093">
    <property type="term" value="P:FtsZ-dependent cytokinesis"/>
    <property type="evidence" value="ECO:0007669"/>
    <property type="project" value="UniProtKB-UniRule"/>
</dbReference>
<dbReference type="Gene3D" id="1.20.5.400">
    <property type="match status" value="1"/>
</dbReference>
<dbReference type="HAMAP" id="MF_00599">
    <property type="entry name" value="FtsB"/>
    <property type="match status" value="1"/>
</dbReference>
<dbReference type="InterPro" id="IPR023081">
    <property type="entry name" value="Cell_div_FtsB"/>
</dbReference>
<dbReference type="InterPro" id="IPR007060">
    <property type="entry name" value="FtsL/DivIC"/>
</dbReference>
<dbReference type="NCBIfam" id="NF002058">
    <property type="entry name" value="PRK00888.1"/>
    <property type="match status" value="1"/>
</dbReference>
<dbReference type="PANTHER" id="PTHR37485">
    <property type="entry name" value="CELL DIVISION PROTEIN FTSB"/>
    <property type="match status" value="1"/>
</dbReference>
<dbReference type="PANTHER" id="PTHR37485:SF1">
    <property type="entry name" value="CELL DIVISION PROTEIN FTSB"/>
    <property type="match status" value="1"/>
</dbReference>
<dbReference type="Pfam" id="PF04977">
    <property type="entry name" value="DivIC"/>
    <property type="match status" value="1"/>
</dbReference>
<reference key="1">
    <citation type="submission" date="2008-04" db="EMBL/GenBank/DDBJ databases">
        <title>Complete sequence of Yersinia pseudotuberculosis PB1/+.</title>
        <authorList>
            <person name="Copeland A."/>
            <person name="Lucas S."/>
            <person name="Lapidus A."/>
            <person name="Glavina del Rio T."/>
            <person name="Dalin E."/>
            <person name="Tice H."/>
            <person name="Bruce D."/>
            <person name="Goodwin L."/>
            <person name="Pitluck S."/>
            <person name="Munk A.C."/>
            <person name="Brettin T."/>
            <person name="Detter J.C."/>
            <person name="Han C."/>
            <person name="Tapia R."/>
            <person name="Schmutz J."/>
            <person name="Larimer F."/>
            <person name="Land M."/>
            <person name="Hauser L."/>
            <person name="Challacombe J.F."/>
            <person name="Green L."/>
            <person name="Lindler L.E."/>
            <person name="Nikolich M.P."/>
            <person name="Richardson P."/>
        </authorList>
    </citation>
    <scope>NUCLEOTIDE SEQUENCE [LARGE SCALE GENOMIC DNA]</scope>
    <source>
        <strain>PB1/+</strain>
    </source>
</reference>
<proteinExistence type="inferred from homology"/>
<protein>
    <recommendedName>
        <fullName evidence="1">Cell division protein FtsB</fullName>
    </recommendedName>
</protein>